<keyword id="KW-0326">Glycosidase</keyword>
<keyword id="KW-0378">Hydrolase</keyword>
<protein>
    <recommendedName>
        <fullName evidence="1">6-phospho-beta-galactosidase</fullName>
        <ecNumber evidence="1">3.2.1.85</ecNumber>
    </recommendedName>
    <alternativeName>
        <fullName evidence="1">Beta-D-phosphogalactoside galactohydrolase</fullName>
        <shortName evidence="1">PGALase</shortName>
    </alternativeName>
    <alternativeName>
        <fullName evidence="1">P-beta-Gal</fullName>
        <shortName evidence="1">PBG</shortName>
    </alternativeName>
</protein>
<sequence>MSKQLPQDFVMGGATAAYQVEGATKEDGKGRVLWDDFLDKQGRFKPDPAADFYHRYDEDLALAEKYGHQVIRVSIAWSRIFPDGAGEVEPRGVAFYHKLFADCAAHHIEPFVTLHHFDTPERLHEAGDWLSQEMLDDFVAYAKFCFEEFSEVKYWITINEPTSMAVQQYTTGTFPPAESGRFDKTFQAEHNQMVAHARIVNLYKSMQLGGQIGIVHALQTVYPYSDSAVDHHAAELQDALENRLYLDGTLAGEYHQETLALVKEILDANHQPMFQSTPQEMKAIDEAAHQLDFVGVNNYFSKWLRAYHGKSETIHNGDGTKGSSVARLQGVGEEKLPDGIETTDWDWSIYPRGMYDILMRIHNDYPLVPVTYVTENGIGLKESLPENATPDTVIEDPKRIDYVKKYLSAMADAIHDGANVKGYFIWSLQDQFSWTNGYSKRYGLFFVDFPTQNRYIKQSAEWFKSVSETHIIPD</sequence>
<proteinExistence type="inferred from homology"/>
<feature type="chain" id="PRO_0000063882" description="6-phospho-beta-galactosidase">
    <location>
        <begin position="1"/>
        <end position="474"/>
    </location>
</feature>
<feature type="active site" description="Proton donor" evidence="1">
    <location>
        <position position="160"/>
    </location>
</feature>
<feature type="active site" description="Nucleophile" evidence="1">
    <location>
        <position position="375"/>
    </location>
</feature>
<feature type="binding site" evidence="1">
    <location>
        <position position="19"/>
    </location>
    <ligand>
        <name>D-galactose 6-phosphate</name>
        <dbReference type="ChEBI" id="CHEBI:91004"/>
    </ligand>
</feature>
<feature type="binding site" evidence="1">
    <location>
        <position position="116"/>
    </location>
    <ligand>
        <name>D-galactose 6-phosphate</name>
        <dbReference type="ChEBI" id="CHEBI:91004"/>
    </ligand>
</feature>
<feature type="binding site" evidence="1">
    <location>
        <position position="159"/>
    </location>
    <ligand>
        <name>D-galactose 6-phosphate</name>
        <dbReference type="ChEBI" id="CHEBI:91004"/>
    </ligand>
</feature>
<feature type="binding site" evidence="1">
    <location>
        <position position="160"/>
    </location>
    <ligand>
        <name>D-galactose 6-phosphate</name>
        <dbReference type="ChEBI" id="CHEBI:91004"/>
    </ligand>
</feature>
<feature type="binding site" evidence="1">
    <location>
        <position position="297"/>
    </location>
    <ligand>
        <name>D-galactose 6-phosphate</name>
        <dbReference type="ChEBI" id="CHEBI:91004"/>
    </ligand>
</feature>
<feature type="binding site" evidence="1">
    <location>
        <position position="433"/>
    </location>
    <ligand>
        <name>D-galactose 6-phosphate</name>
        <dbReference type="ChEBI" id="CHEBI:91004"/>
    </ligand>
</feature>
<feature type="binding site" evidence="1">
    <location>
        <position position="434"/>
    </location>
    <ligand>
        <name>D-galactose 6-phosphate</name>
        <dbReference type="ChEBI" id="CHEBI:91004"/>
    </ligand>
</feature>
<feature type="binding site" evidence="1">
    <location>
        <position position="440"/>
    </location>
    <ligand>
        <name>D-galactose 6-phosphate</name>
        <dbReference type="ChEBI" id="CHEBI:91004"/>
    </ligand>
</feature>
<feature type="binding site" evidence="1">
    <location>
        <position position="442"/>
    </location>
    <ligand>
        <name>D-galactose 6-phosphate</name>
        <dbReference type="ChEBI" id="CHEBI:91004"/>
    </ligand>
</feature>
<accession>P14696</accession>
<dbReference type="EC" id="3.2.1.85" evidence="1"/>
<dbReference type="EMBL" id="M20151">
    <property type="protein sequence ID" value="AAD15134.1"/>
    <property type="molecule type" value="Genomic_DNA"/>
</dbReference>
<dbReference type="EMBL" id="Z80834">
    <property type="protein sequence ID" value="CAB02557.1"/>
    <property type="molecule type" value="Genomic_DNA"/>
</dbReference>
<dbReference type="EMBL" id="M20150">
    <property type="protein sequence ID" value="AAA25238.1"/>
    <property type="status" value="ALT_SEQ"/>
    <property type="molecule type" value="Genomic_DNA"/>
</dbReference>
<dbReference type="PIR" id="A29897">
    <property type="entry name" value="A29897"/>
</dbReference>
<dbReference type="PIR" id="A29898">
    <property type="entry name" value="A29898"/>
</dbReference>
<dbReference type="SMR" id="P14696"/>
<dbReference type="STRING" id="1582.AAW28_06695"/>
<dbReference type="CAZy" id="GH1">
    <property type="family name" value="Glycoside Hydrolase Family 1"/>
</dbReference>
<dbReference type="eggNOG" id="COG2723">
    <property type="taxonomic scope" value="Bacteria"/>
</dbReference>
<dbReference type="SABIO-RK" id="P14696"/>
<dbReference type="UniPathway" id="UPA00542">
    <property type="reaction ID" value="UER00605"/>
</dbReference>
<dbReference type="GO" id="GO:0005829">
    <property type="term" value="C:cytosol"/>
    <property type="evidence" value="ECO:0007669"/>
    <property type="project" value="TreeGrafter"/>
</dbReference>
<dbReference type="GO" id="GO:0033920">
    <property type="term" value="F:6-phospho-beta-galactosidase activity"/>
    <property type="evidence" value="ECO:0007669"/>
    <property type="project" value="UniProtKB-UniRule"/>
</dbReference>
<dbReference type="GO" id="GO:0008422">
    <property type="term" value="F:beta-glucosidase activity"/>
    <property type="evidence" value="ECO:0007669"/>
    <property type="project" value="TreeGrafter"/>
</dbReference>
<dbReference type="GO" id="GO:0019512">
    <property type="term" value="P:lactose catabolic process via tagatose-6-phosphate"/>
    <property type="evidence" value="ECO:0007669"/>
    <property type="project" value="InterPro"/>
</dbReference>
<dbReference type="FunFam" id="3.20.20.80:FF:000004">
    <property type="entry name" value="Beta-glucosidase 6-phospho-beta-glucosidase"/>
    <property type="match status" value="1"/>
</dbReference>
<dbReference type="Gene3D" id="3.20.20.80">
    <property type="entry name" value="Glycosidases"/>
    <property type="match status" value="1"/>
</dbReference>
<dbReference type="HAMAP" id="MF_01574">
    <property type="entry name" value="LacG"/>
    <property type="match status" value="1"/>
</dbReference>
<dbReference type="InterPro" id="IPR005928">
    <property type="entry name" value="6P-beta-galactosidase"/>
</dbReference>
<dbReference type="InterPro" id="IPR001360">
    <property type="entry name" value="Glyco_hydro_1"/>
</dbReference>
<dbReference type="InterPro" id="IPR018120">
    <property type="entry name" value="Glyco_hydro_1_AS"/>
</dbReference>
<dbReference type="InterPro" id="IPR033132">
    <property type="entry name" value="Glyco_hydro_1_N_CS"/>
</dbReference>
<dbReference type="InterPro" id="IPR017853">
    <property type="entry name" value="Glycoside_hydrolase_SF"/>
</dbReference>
<dbReference type="NCBIfam" id="TIGR01233">
    <property type="entry name" value="lacG"/>
    <property type="match status" value="1"/>
</dbReference>
<dbReference type="NCBIfam" id="NF010036">
    <property type="entry name" value="PRK13511.1"/>
    <property type="match status" value="1"/>
</dbReference>
<dbReference type="PANTHER" id="PTHR10353">
    <property type="entry name" value="GLYCOSYL HYDROLASE"/>
    <property type="match status" value="1"/>
</dbReference>
<dbReference type="PANTHER" id="PTHR10353:SF36">
    <property type="entry name" value="LP05116P"/>
    <property type="match status" value="1"/>
</dbReference>
<dbReference type="Pfam" id="PF00232">
    <property type="entry name" value="Glyco_hydro_1"/>
    <property type="match status" value="1"/>
</dbReference>
<dbReference type="PRINTS" id="PR00131">
    <property type="entry name" value="GLHYDRLASE1"/>
</dbReference>
<dbReference type="SUPFAM" id="SSF51445">
    <property type="entry name" value="(Trans)glycosidases"/>
    <property type="match status" value="1"/>
</dbReference>
<dbReference type="PROSITE" id="PS00572">
    <property type="entry name" value="GLYCOSYL_HYDROL_F1_1"/>
    <property type="match status" value="1"/>
</dbReference>
<dbReference type="PROSITE" id="PS00653">
    <property type="entry name" value="GLYCOSYL_HYDROL_F1_2"/>
    <property type="match status" value="1"/>
</dbReference>
<gene>
    <name evidence="1" type="primary">lacG</name>
</gene>
<comment type="catalytic activity">
    <reaction evidence="1">
        <text>a 6-phospho-beta-D-galactoside + H2O = D-galactose 6-phosphate + an alcohol</text>
        <dbReference type="Rhea" id="RHEA:24568"/>
        <dbReference type="ChEBI" id="CHEBI:15377"/>
        <dbReference type="ChEBI" id="CHEBI:30879"/>
        <dbReference type="ChEBI" id="CHEBI:58534"/>
        <dbReference type="ChEBI" id="CHEBI:91004"/>
        <dbReference type="EC" id="3.2.1.85"/>
    </reaction>
</comment>
<comment type="pathway">
    <text evidence="1">Carbohydrate metabolism; lactose degradation; D-galactose 6-phosphate and beta-D-glucose from lactose 6-phosphate: step 1/1.</text>
</comment>
<comment type="similarity">
    <text evidence="1">Belongs to the glycosyl hydrolase 1 family.</text>
</comment>
<organism>
    <name type="scientific">Lacticaseibacillus casei</name>
    <name type="common">Lactobacillus casei</name>
    <dbReference type="NCBI Taxonomy" id="1582"/>
    <lineage>
        <taxon>Bacteria</taxon>
        <taxon>Bacillati</taxon>
        <taxon>Bacillota</taxon>
        <taxon>Bacilli</taxon>
        <taxon>Lactobacillales</taxon>
        <taxon>Lactobacillaceae</taxon>
        <taxon>Lacticaseibacillus</taxon>
    </lineage>
</organism>
<name>LACG_LACCA</name>
<evidence type="ECO:0000255" key="1">
    <source>
        <dbReference type="HAMAP-Rule" id="MF_01574"/>
    </source>
</evidence>
<reference key="1">
    <citation type="journal article" date="1988" name="Gene">
        <title>Nucleotide sequence of the beta-D-phosphogalactoside galactohydrolase gene of Lactobacillus casei: comparison to analogous pbg genes of other Gram-positive organisms.</title>
        <authorList>
            <person name="Porter E.V."/>
            <person name="Chassy B.M."/>
        </authorList>
    </citation>
    <scope>NUCLEOTIDE SEQUENCE [GENOMIC DNA]</scope>
</reference>
<reference key="2">
    <citation type="journal article" date="1997" name="FEMS Microbiol. Lett.">
        <title>Establishing a model to study the regulation of the lactose operon in Lactobacillus casei.</title>
        <authorList>
            <person name="Gosalbes M.J."/>
            <person name="Monedero V."/>
            <person name="Alpert C.-A."/>
            <person name="Perez-Martinez G."/>
        </authorList>
    </citation>
    <scope>NUCLEOTIDE SEQUENCE [GENOMIC DNA]</scope>
    <source>
        <strain>ATCC 393 / DSM 20011 / JCM 1134 / BCRC 10697 / CCUG 21451 / NBRC 15883 / NCIMB 11970 / NCDO 161 / WDCM 00100</strain>
    </source>
</reference>
<reference key="3">
    <citation type="journal article" date="1988" name="Gene">
        <title>Molecular cloning and nucleotide sequence of the factor IIIlac gene of Lactobacillus casei.</title>
        <authorList>
            <person name="Alpert C.-A."/>
            <person name="Chassy B.M."/>
        </authorList>
    </citation>
    <scope>NUCLEOTIDE SEQUENCE [GENOMIC DNA] OF 384-474</scope>
</reference>